<name>D42E1_HUMAN</name>
<reference key="1">
    <citation type="submission" date="2005-09" db="EMBL/GenBank/DDBJ databases">
        <authorList>
            <person name="Mural R.J."/>
            <person name="Istrail S."/>
            <person name="Sutton G.G."/>
            <person name="Florea L."/>
            <person name="Halpern A.L."/>
            <person name="Mobarry C.M."/>
            <person name="Lippert R."/>
            <person name="Walenz B."/>
            <person name="Shatkay H."/>
            <person name="Dew I."/>
            <person name="Miller J.R."/>
            <person name="Flanigan M.J."/>
            <person name="Edwards N.J."/>
            <person name="Bolanos R."/>
            <person name="Fasulo D."/>
            <person name="Halldorsson B.V."/>
            <person name="Hannenhalli S."/>
            <person name="Turner R."/>
            <person name="Yooseph S."/>
            <person name="Lu F."/>
            <person name="Nusskern D.R."/>
            <person name="Shue B.C."/>
            <person name="Zheng X.H."/>
            <person name="Zhong F."/>
            <person name="Delcher A.L."/>
            <person name="Huson D.H."/>
            <person name="Kravitz S.A."/>
            <person name="Mouchard L."/>
            <person name="Reinert K."/>
            <person name="Remington K.A."/>
            <person name="Clark A.G."/>
            <person name="Waterman M.S."/>
            <person name="Eichler E.E."/>
            <person name="Adams M.D."/>
            <person name="Hunkapiller M.W."/>
            <person name="Myers E.W."/>
            <person name="Venter J.C."/>
        </authorList>
    </citation>
    <scope>NUCLEOTIDE SEQUENCE [LARGE SCALE GENOMIC DNA]</scope>
</reference>
<reference key="2">
    <citation type="journal article" date="2004" name="Nat. Genet.">
        <title>Complete sequencing and characterization of 21,243 full-length human cDNAs.</title>
        <authorList>
            <person name="Ota T."/>
            <person name="Suzuki Y."/>
            <person name="Nishikawa T."/>
            <person name="Otsuki T."/>
            <person name="Sugiyama T."/>
            <person name="Irie R."/>
            <person name="Wakamatsu A."/>
            <person name="Hayashi K."/>
            <person name="Sato H."/>
            <person name="Nagai K."/>
            <person name="Kimura K."/>
            <person name="Makita H."/>
            <person name="Sekine M."/>
            <person name="Obayashi M."/>
            <person name="Nishi T."/>
            <person name="Shibahara T."/>
            <person name="Tanaka T."/>
            <person name="Ishii S."/>
            <person name="Yamamoto J."/>
            <person name="Saito K."/>
            <person name="Kawai Y."/>
            <person name="Isono Y."/>
            <person name="Nakamura Y."/>
            <person name="Nagahari K."/>
            <person name="Murakami K."/>
            <person name="Yasuda T."/>
            <person name="Iwayanagi T."/>
            <person name="Wagatsuma M."/>
            <person name="Shiratori A."/>
            <person name="Sudo H."/>
            <person name="Hosoiri T."/>
            <person name="Kaku Y."/>
            <person name="Kodaira H."/>
            <person name="Kondo H."/>
            <person name="Sugawara M."/>
            <person name="Takahashi M."/>
            <person name="Kanda K."/>
            <person name="Yokoi T."/>
            <person name="Furuya T."/>
            <person name="Kikkawa E."/>
            <person name="Omura Y."/>
            <person name="Abe K."/>
            <person name="Kamihara K."/>
            <person name="Katsuta N."/>
            <person name="Sato K."/>
            <person name="Tanikawa M."/>
            <person name="Yamazaki M."/>
            <person name="Ninomiya K."/>
            <person name="Ishibashi T."/>
            <person name="Yamashita H."/>
            <person name="Murakawa K."/>
            <person name="Fujimori K."/>
            <person name="Tanai H."/>
            <person name="Kimata M."/>
            <person name="Watanabe M."/>
            <person name="Hiraoka S."/>
            <person name="Chiba Y."/>
            <person name="Ishida S."/>
            <person name="Ono Y."/>
            <person name="Takiguchi S."/>
            <person name="Watanabe S."/>
            <person name="Yosida M."/>
            <person name="Hotuta T."/>
            <person name="Kusano J."/>
            <person name="Kanehori K."/>
            <person name="Takahashi-Fujii A."/>
            <person name="Hara H."/>
            <person name="Tanase T.-O."/>
            <person name="Nomura Y."/>
            <person name="Togiya S."/>
            <person name="Komai F."/>
            <person name="Hara R."/>
            <person name="Takeuchi K."/>
            <person name="Arita M."/>
            <person name="Imose N."/>
            <person name="Musashino K."/>
            <person name="Yuuki H."/>
            <person name="Oshima A."/>
            <person name="Sasaki N."/>
            <person name="Aotsuka S."/>
            <person name="Yoshikawa Y."/>
            <person name="Matsunawa H."/>
            <person name="Ichihara T."/>
            <person name="Shiohata N."/>
            <person name="Sano S."/>
            <person name="Moriya S."/>
            <person name="Momiyama H."/>
            <person name="Satoh N."/>
            <person name="Takami S."/>
            <person name="Terashima Y."/>
            <person name="Suzuki O."/>
            <person name="Nakagawa S."/>
            <person name="Senoh A."/>
            <person name="Mizoguchi H."/>
            <person name="Goto Y."/>
            <person name="Shimizu F."/>
            <person name="Wakebe H."/>
            <person name="Hishigaki H."/>
            <person name="Watanabe T."/>
            <person name="Sugiyama A."/>
            <person name="Takemoto M."/>
            <person name="Kawakami B."/>
            <person name="Yamazaki M."/>
            <person name="Watanabe K."/>
            <person name="Kumagai A."/>
            <person name="Itakura S."/>
            <person name="Fukuzumi Y."/>
            <person name="Fujimori Y."/>
            <person name="Komiyama M."/>
            <person name="Tashiro H."/>
            <person name="Tanigami A."/>
            <person name="Fujiwara T."/>
            <person name="Ono T."/>
            <person name="Yamada K."/>
            <person name="Fujii Y."/>
            <person name="Ozaki K."/>
            <person name="Hirao M."/>
            <person name="Ohmori Y."/>
            <person name="Kawabata A."/>
            <person name="Hikiji T."/>
            <person name="Kobatake N."/>
            <person name="Inagaki H."/>
            <person name="Ikema Y."/>
            <person name="Okamoto S."/>
            <person name="Okitani R."/>
            <person name="Kawakami T."/>
            <person name="Noguchi S."/>
            <person name="Itoh T."/>
            <person name="Shigeta K."/>
            <person name="Senba T."/>
            <person name="Matsumura K."/>
            <person name="Nakajima Y."/>
            <person name="Mizuno T."/>
            <person name="Morinaga M."/>
            <person name="Sasaki M."/>
            <person name="Togashi T."/>
            <person name="Oyama M."/>
            <person name="Hata H."/>
            <person name="Watanabe M."/>
            <person name="Komatsu T."/>
            <person name="Mizushima-Sugano J."/>
            <person name="Satoh T."/>
            <person name="Shirai Y."/>
            <person name="Takahashi Y."/>
            <person name="Nakagawa K."/>
            <person name="Okumura K."/>
            <person name="Nagase T."/>
            <person name="Nomura N."/>
            <person name="Kikuchi H."/>
            <person name="Masuho Y."/>
            <person name="Yamashita R."/>
            <person name="Nakai K."/>
            <person name="Yada T."/>
            <person name="Nakamura Y."/>
            <person name="Ohara O."/>
            <person name="Isogai T."/>
            <person name="Sugano S."/>
        </authorList>
    </citation>
    <scope>NUCLEOTIDE SEQUENCE [LARGE SCALE MRNA] OF 1-383</scope>
    <source>
        <tissue>Mammary gland</tissue>
    </source>
</reference>
<reference key="3">
    <citation type="journal article" date="2004" name="Genome Res.">
        <title>The status, quality, and expansion of the NIH full-length cDNA project: the Mammalian Gene Collection (MGC).</title>
        <authorList>
            <consortium name="The MGC Project Team"/>
        </authorList>
    </citation>
    <scope>NUCLEOTIDE SEQUENCE [LARGE SCALE MRNA] OF 1-383</scope>
    <source>
        <tissue>Urinary bladder</tissue>
    </source>
</reference>
<reference key="4">
    <citation type="journal article" date="2000" name="Genome Res.">
        <title>Cloning and functional analysis of cDNAs with open reading frames for 300 previously undefined genes expressed in CD34+ hematopoietic stem/progenitor cells.</title>
        <authorList>
            <person name="Zhang Q.-H."/>
            <person name="Ye M."/>
            <person name="Wu X.-Y."/>
            <person name="Ren S.-X."/>
            <person name="Zhao M."/>
            <person name="Zhao C.-J."/>
            <person name="Fu G."/>
            <person name="Shen Y."/>
            <person name="Fan H.-Y."/>
            <person name="Lu G."/>
            <person name="Zhong M."/>
            <person name="Xu X.-R."/>
            <person name="Han Z.-G."/>
            <person name="Zhang J.-W."/>
            <person name="Tao J."/>
            <person name="Huang Q.-H."/>
            <person name="Zhou J."/>
            <person name="Hu G.-X."/>
            <person name="Gu J."/>
            <person name="Chen S.-J."/>
            <person name="Chen Z."/>
        </authorList>
    </citation>
    <scope>NUCLEOTIDE SEQUENCE [LARGE SCALE MRNA] OF 295-393</scope>
    <source>
        <tissue>Umbilical cord blood</tissue>
    </source>
</reference>
<reference key="5">
    <citation type="journal article" date="2009" name="Chem. Biol. Interact.">
        <title>The SDR (short-chain dehydrogenase/reductase and related enzymes) nomenclature initiative.</title>
        <authorList>
            <person name="Persson B."/>
            <person name="Kallberg Y."/>
            <person name="Bray J.E."/>
            <person name="Bruford E."/>
            <person name="Dellaporta S.L."/>
            <person name="Favia A.D."/>
            <person name="Duarte R.G."/>
            <person name="Joernvall H."/>
            <person name="Kavanagh K.L."/>
            <person name="Kedishvili N."/>
            <person name="Kisiela M."/>
            <person name="Maser E."/>
            <person name="Mindnich R."/>
            <person name="Orchard S."/>
            <person name="Penning T.M."/>
            <person name="Thornton J.M."/>
            <person name="Adamski J."/>
            <person name="Oppermann U."/>
        </authorList>
    </citation>
    <scope>NOMENCLATURE</scope>
</reference>
<reference key="6">
    <citation type="journal article" date="2021" name="Exp. Eye Res.">
        <title>Identification of the novel SDR42E1 gene that affects steroid biosynthesis associated with the oculocutaneous genital syndrome.</title>
        <authorList>
            <person name="Bouhouche A."/>
            <person name="Albaroudi N."/>
            <person name="El Alaoui M.A."/>
            <person name="Askander O."/>
            <person name="Habbadi Z."/>
            <person name="El Hassani A."/>
            <person name="Iraqi H."/>
            <person name="El Fahime E."/>
            <person name="Belmekki M."/>
        </authorList>
    </citation>
    <scope>VARIANT GLN-154</scope>
</reference>
<feature type="chain" id="PRO_0000331754" description="Short-chain dehydrogenase/reductase family 42E member 1">
    <location>
        <begin position="1"/>
        <end position="393"/>
    </location>
</feature>
<feature type="transmembrane region" description="Helical" evidence="2">
    <location>
        <begin position="282"/>
        <end position="302"/>
    </location>
</feature>
<feature type="transmembrane region" description="Helical" evidence="2">
    <location>
        <begin position="371"/>
        <end position="391"/>
    </location>
</feature>
<feature type="active site" description="Proton acceptor" evidence="1">
    <location>
        <position position="152"/>
    </location>
</feature>
<feature type="binding site" evidence="1">
    <location>
        <position position="156"/>
    </location>
    <ligand>
        <name>NAD(+)</name>
        <dbReference type="ChEBI" id="CHEBI:57540"/>
    </ligand>
</feature>
<feature type="sequence variant" id="VAR_055344" description="In dbSNP:rs6564956.">
    <original>S</original>
    <variation>T</variation>
    <location>
        <position position="10"/>
    </location>
</feature>
<feature type="sequence variant" id="VAR_055345" description="In dbSNP:rs16956174.">
    <original>K</original>
    <variation>E</variation>
    <location>
        <position position="96"/>
    </location>
</feature>
<feature type="sequence variant" id="VAR_089936" description="Found in two patients with genital anomalies and features compatible with Brittle cornea syndrome; uncertain significance; dbSNP:rs112849482." evidence="3">
    <original>R</original>
    <variation>Q</variation>
    <location>
        <position position="154"/>
    </location>
</feature>
<feature type="sequence variant" id="VAR_055346" description="In dbSNP:rs3813012.">
    <original>G</original>
    <variation>D</variation>
    <location>
        <position position="320"/>
    </location>
</feature>
<feature type="sequence conflict" description="In Ref. 4; AAF28928." evidence="5" ref="4">
    <original>A</original>
    <variation>E</variation>
    <location>
        <position position="380"/>
    </location>
</feature>
<proteinExistence type="evidence at protein level"/>
<sequence length="393" mass="44284">MDPKRSQKESVLITGGSGYFGFRLGCALNQNGVHVILFDISSPAQTIPEGIKFIQGDIRHLSDVEKAFQDADVTCVFHIASYGMSGREQLNRNLIKEVNVRGTDNILQVCQRRRVPRLVYTSTFNVIFGGQVIRNGDESLPYLPLHLHPDHYSRTKSIAEQKVLEANATPLDRGDGVLRTCALRPAGIYGPGEQRHLPRIVSYIEKGLFKFVYGDPRSLVEFVHVDNLVQAHILASEALRADKGHIASGQPYFISDGRPVNNFEFFRPLVEGLGYTFPSTRLPLTLVYCFAFLTEMVHFILGRLYNFQPFLTRTEVYKTGVTHYFSLEKAKKELGYKAQPFDLQEAVEWFKAHGHGRSSGSRDSECFVWDGLLVFLLIIAVLMWLPSSVILSL</sequence>
<dbReference type="EC" id="1.1.1.-"/>
<dbReference type="EMBL" id="CH471114">
    <property type="protein sequence ID" value="EAW95521.1"/>
    <property type="status" value="ALT_SEQ"/>
    <property type="molecule type" value="Genomic_DNA"/>
</dbReference>
<dbReference type="EMBL" id="AK315652">
    <property type="protein sequence ID" value="BAG38018.1"/>
    <property type="molecule type" value="mRNA"/>
</dbReference>
<dbReference type="EMBL" id="BC019670">
    <property type="protein sequence ID" value="AAH19670.1"/>
    <property type="molecule type" value="mRNA"/>
</dbReference>
<dbReference type="EMBL" id="AF161368">
    <property type="protein sequence ID" value="AAF28928.1"/>
    <property type="molecule type" value="mRNA"/>
</dbReference>
<dbReference type="CCDS" id="CCDS42205.1"/>
<dbReference type="RefSeq" id="NP_660151.2">
    <property type="nucleotide sequence ID" value="NM_145168.3"/>
</dbReference>
<dbReference type="RefSeq" id="XP_005256314.1">
    <property type="nucleotide sequence ID" value="XM_005256257.5"/>
</dbReference>
<dbReference type="RefSeq" id="XP_054170411.1">
    <property type="nucleotide sequence ID" value="XM_054314436.1"/>
</dbReference>
<dbReference type="SMR" id="Q8WUS8"/>
<dbReference type="BioGRID" id="125032">
    <property type="interactions" value="3"/>
</dbReference>
<dbReference type="FunCoup" id="Q8WUS8">
    <property type="interactions" value="9"/>
</dbReference>
<dbReference type="IntAct" id="Q8WUS8">
    <property type="interactions" value="1"/>
</dbReference>
<dbReference type="STRING" id="9606.ENSP00000332407"/>
<dbReference type="iPTMnet" id="Q8WUS8"/>
<dbReference type="PhosphoSitePlus" id="Q8WUS8"/>
<dbReference type="BioMuta" id="SDR42E1"/>
<dbReference type="DMDM" id="187661956"/>
<dbReference type="PaxDb" id="9606-ENSP00000332407"/>
<dbReference type="PeptideAtlas" id="Q8WUS8"/>
<dbReference type="ProteomicsDB" id="74705"/>
<dbReference type="Antibodypedia" id="3063">
    <property type="antibodies" value="17 antibodies from 12 providers"/>
</dbReference>
<dbReference type="DNASU" id="93517"/>
<dbReference type="Ensembl" id="ENST00000328945.7">
    <property type="protein sequence ID" value="ENSP00000332407.4"/>
    <property type="gene ID" value="ENSG00000184860.10"/>
</dbReference>
<dbReference type="GeneID" id="93517"/>
<dbReference type="KEGG" id="hsa:93517"/>
<dbReference type="MANE-Select" id="ENST00000328945.7">
    <property type="protein sequence ID" value="ENSP00000332407.4"/>
    <property type="RefSeq nucleotide sequence ID" value="NM_145168.3"/>
    <property type="RefSeq protein sequence ID" value="NP_660151.2"/>
</dbReference>
<dbReference type="UCSC" id="uc002fgu.4">
    <property type="organism name" value="human"/>
</dbReference>
<dbReference type="AGR" id="HGNC:29834"/>
<dbReference type="CTD" id="93517"/>
<dbReference type="DisGeNET" id="93517"/>
<dbReference type="GeneCards" id="SDR42E1"/>
<dbReference type="HGNC" id="HGNC:29834">
    <property type="gene designation" value="SDR42E1"/>
</dbReference>
<dbReference type="HPA" id="ENSG00000184860">
    <property type="expression patterns" value="Tissue enhanced (skin)"/>
</dbReference>
<dbReference type="MIM" id="616164">
    <property type="type" value="gene"/>
</dbReference>
<dbReference type="neXtProt" id="NX_Q8WUS8"/>
<dbReference type="OpenTargets" id="ENSG00000184860"/>
<dbReference type="PharmGKB" id="PA164725636"/>
<dbReference type="VEuPathDB" id="HostDB:ENSG00000184860"/>
<dbReference type="eggNOG" id="KOG1430">
    <property type="taxonomic scope" value="Eukaryota"/>
</dbReference>
<dbReference type="GeneTree" id="ENSGT00940000158070"/>
<dbReference type="InParanoid" id="Q8WUS8"/>
<dbReference type="OMA" id="IGAYKRS"/>
<dbReference type="OrthoDB" id="2735536at2759"/>
<dbReference type="PAN-GO" id="Q8WUS8">
    <property type="GO annotations" value="1 GO annotation based on evolutionary models"/>
</dbReference>
<dbReference type="PhylomeDB" id="Q8WUS8"/>
<dbReference type="TreeFam" id="TF313574"/>
<dbReference type="PathwayCommons" id="Q8WUS8"/>
<dbReference type="SignaLink" id="Q8WUS8"/>
<dbReference type="BioGRID-ORCS" id="93517">
    <property type="hits" value="5 hits in 1142 CRISPR screens"/>
</dbReference>
<dbReference type="GenomeRNAi" id="93517"/>
<dbReference type="Pharos" id="Q8WUS8">
    <property type="development level" value="Tdark"/>
</dbReference>
<dbReference type="PRO" id="PR:Q8WUS8"/>
<dbReference type="Proteomes" id="UP000005640">
    <property type="component" value="Chromosome 16"/>
</dbReference>
<dbReference type="RNAct" id="Q8WUS8">
    <property type="molecule type" value="protein"/>
</dbReference>
<dbReference type="Bgee" id="ENSG00000184860">
    <property type="expression patterns" value="Expressed in upper leg skin and 99 other cell types or tissues"/>
</dbReference>
<dbReference type="ExpressionAtlas" id="Q8WUS8">
    <property type="expression patterns" value="baseline and differential"/>
</dbReference>
<dbReference type="GO" id="GO:0016020">
    <property type="term" value="C:membrane"/>
    <property type="evidence" value="ECO:0007669"/>
    <property type="project" value="UniProtKB-SubCell"/>
</dbReference>
<dbReference type="GO" id="GO:0016616">
    <property type="term" value="F:oxidoreductase activity, acting on the CH-OH group of donors, NAD or NADP as acceptor"/>
    <property type="evidence" value="ECO:0000318"/>
    <property type="project" value="GO_Central"/>
</dbReference>
<dbReference type="GO" id="GO:0006694">
    <property type="term" value="P:steroid biosynthetic process"/>
    <property type="evidence" value="ECO:0007669"/>
    <property type="project" value="InterPro"/>
</dbReference>
<dbReference type="CDD" id="cd09812">
    <property type="entry name" value="3b-HSD_like_1_SDR_e"/>
    <property type="match status" value="1"/>
</dbReference>
<dbReference type="FunFam" id="3.40.50.720:FF:000138">
    <property type="entry name" value="Short-chain dehydrogenase/reductase family 42E member 1"/>
    <property type="match status" value="1"/>
</dbReference>
<dbReference type="Gene3D" id="3.40.50.720">
    <property type="entry name" value="NAD(P)-binding Rossmann-like Domain"/>
    <property type="match status" value="1"/>
</dbReference>
<dbReference type="InterPro" id="IPR002225">
    <property type="entry name" value="3Beta_OHSteriod_DH/Estase"/>
</dbReference>
<dbReference type="InterPro" id="IPR050177">
    <property type="entry name" value="Lipid_A_modif_metabolic_enz"/>
</dbReference>
<dbReference type="InterPro" id="IPR036291">
    <property type="entry name" value="NAD(P)-bd_dom_sf"/>
</dbReference>
<dbReference type="PANTHER" id="PTHR43245">
    <property type="entry name" value="BIFUNCTIONAL POLYMYXIN RESISTANCE PROTEIN ARNA"/>
    <property type="match status" value="1"/>
</dbReference>
<dbReference type="PANTHER" id="PTHR43245:SF51">
    <property type="entry name" value="SHORT CHAIN DEHYDROGENASE_REDUCTASE FAMILY 42E, MEMBER 2"/>
    <property type="match status" value="1"/>
</dbReference>
<dbReference type="Pfam" id="PF01073">
    <property type="entry name" value="3Beta_HSD"/>
    <property type="match status" value="1"/>
</dbReference>
<dbReference type="SUPFAM" id="SSF51735">
    <property type="entry name" value="NAD(P)-binding Rossmann-fold domains"/>
    <property type="match status" value="1"/>
</dbReference>
<evidence type="ECO:0000250" key="1"/>
<evidence type="ECO:0000255" key="2"/>
<evidence type="ECO:0000269" key="3">
    <source>
    </source>
</evidence>
<evidence type="ECO:0000303" key="4">
    <source>
    </source>
</evidence>
<evidence type="ECO:0000305" key="5"/>
<organism>
    <name type="scientific">Homo sapiens</name>
    <name type="common">Human</name>
    <dbReference type="NCBI Taxonomy" id="9606"/>
    <lineage>
        <taxon>Eukaryota</taxon>
        <taxon>Metazoa</taxon>
        <taxon>Chordata</taxon>
        <taxon>Craniata</taxon>
        <taxon>Vertebrata</taxon>
        <taxon>Euteleostomi</taxon>
        <taxon>Mammalia</taxon>
        <taxon>Eutheria</taxon>
        <taxon>Euarchontoglires</taxon>
        <taxon>Primates</taxon>
        <taxon>Haplorrhini</taxon>
        <taxon>Catarrhini</taxon>
        <taxon>Hominidae</taxon>
        <taxon>Homo</taxon>
    </lineage>
</organism>
<protein>
    <recommendedName>
        <fullName evidence="4">Short-chain dehydrogenase/reductase family 42E member 1</fullName>
        <ecNumber>1.1.1.-</ecNumber>
    </recommendedName>
</protein>
<accession>Q8WUS8</accession>
<accession>B2RDS1</accession>
<accession>Q9P0D1</accession>
<keyword id="KW-0472">Membrane</keyword>
<keyword id="KW-0520">NAD</keyword>
<keyword id="KW-0560">Oxidoreductase</keyword>
<keyword id="KW-1267">Proteomics identification</keyword>
<keyword id="KW-1185">Reference proteome</keyword>
<keyword id="KW-0812">Transmembrane</keyword>
<keyword id="KW-1133">Transmembrane helix</keyword>
<gene>
    <name type="primary">SDR42E1</name>
    <name type="ORF">HSPC105</name>
</gene>
<comment type="subcellular location">
    <subcellularLocation>
        <location evidence="5">Membrane</location>
        <topology evidence="5">Multi-pass membrane protein</topology>
    </subcellularLocation>
</comment>
<comment type="similarity">
    <text evidence="5">Belongs to the 3-beta-HSD family.</text>
</comment>
<comment type="sequence caution" evidence="5">
    <conflict type="erroneous gene model prediction">
        <sequence resource="EMBL-CDS" id="EAW95521"/>
    </conflict>
</comment>